<accession>O60268</accession>
<accession>B4DSS5</accession>
<accession>D3DUM2</accession>
<accession>Q8N6G0</accession>
<proteinExistence type="evidence at protein level"/>
<organism>
    <name type="scientific">Homo sapiens</name>
    <name type="common">Human</name>
    <dbReference type="NCBI Taxonomy" id="9606"/>
    <lineage>
        <taxon>Eukaryota</taxon>
        <taxon>Metazoa</taxon>
        <taxon>Chordata</taxon>
        <taxon>Craniata</taxon>
        <taxon>Vertebrata</taxon>
        <taxon>Euteleostomi</taxon>
        <taxon>Mammalia</taxon>
        <taxon>Eutheria</taxon>
        <taxon>Euarchontoglires</taxon>
        <taxon>Primates</taxon>
        <taxon>Haplorrhini</taxon>
        <taxon>Catarrhini</taxon>
        <taxon>Hominidae</taxon>
        <taxon>Homo</taxon>
    </lineage>
</organism>
<reference key="1">
    <citation type="journal article" date="1998" name="DNA Res.">
        <title>Prediction of the coding sequences of unidentified human genes. IX. The complete sequences of 100 new cDNA clones from brain which can code for large proteins in vitro.</title>
        <authorList>
            <person name="Nagase T."/>
            <person name="Ishikawa K."/>
            <person name="Miyajima N."/>
            <person name="Tanaka A."/>
            <person name="Kotani H."/>
            <person name="Nomura N."/>
            <person name="Ohara O."/>
        </authorList>
    </citation>
    <scope>NUCLEOTIDE SEQUENCE [LARGE SCALE MRNA] (ISOFORM 1)</scope>
    <source>
        <tissue>Brain</tissue>
    </source>
</reference>
<reference key="2">
    <citation type="journal article" date="2004" name="Nat. Genet.">
        <title>Complete sequencing and characterization of 21,243 full-length human cDNAs.</title>
        <authorList>
            <person name="Ota T."/>
            <person name="Suzuki Y."/>
            <person name="Nishikawa T."/>
            <person name="Otsuki T."/>
            <person name="Sugiyama T."/>
            <person name="Irie R."/>
            <person name="Wakamatsu A."/>
            <person name="Hayashi K."/>
            <person name="Sato H."/>
            <person name="Nagai K."/>
            <person name="Kimura K."/>
            <person name="Makita H."/>
            <person name="Sekine M."/>
            <person name="Obayashi M."/>
            <person name="Nishi T."/>
            <person name="Shibahara T."/>
            <person name="Tanaka T."/>
            <person name="Ishii S."/>
            <person name="Yamamoto J."/>
            <person name="Saito K."/>
            <person name="Kawai Y."/>
            <person name="Isono Y."/>
            <person name="Nakamura Y."/>
            <person name="Nagahari K."/>
            <person name="Murakami K."/>
            <person name="Yasuda T."/>
            <person name="Iwayanagi T."/>
            <person name="Wagatsuma M."/>
            <person name="Shiratori A."/>
            <person name="Sudo H."/>
            <person name="Hosoiri T."/>
            <person name="Kaku Y."/>
            <person name="Kodaira H."/>
            <person name="Kondo H."/>
            <person name="Sugawara M."/>
            <person name="Takahashi M."/>
            <person name="Kanda K."/>
            <person name="Yokoi T."/>
            <person name="Furuya T."/>
            <person name="Kikkawa E."/>
            <person name="Omura Y."/>
            <person name="Abe K."/>
            <person name="Kamihara K."/>
            <person name="Katsuta N."/>
            <person name="Sato K."/>
            <person name="Tanikawa M."/>
            <person name="Yamazaki M."/>
            <person name="Ninomiya K."/>
            <person name="Ishibashi T."/>
            <person name="Yamashita H."/>
            <person name="Murakawa K."/>
            <person name="Fujimori K."/>
            <person name="Tanai H."/>
            <person name="Kimata M."/>
            <person name="Watanabe M."/>
            <person name="Hiraoka S."/>
            <person name="Chiba Y."/>
            <person name="Ishida S."/>
            <person name="Ono Y."/>
            <person name="Takiguchi S."/>
            <person name="Watanabe S."/>
            <person name="Yosida M."/>
            <person name="Hotuta T."/>
            <person name="Kusano J."/>
            <person name="Kanehori K."/>
            <person name="Takahashi-Fujii A."/>
            <person name="Hara H."/>
            <person name="Tanase T.-O."/>
            <person name="Nomura Y."/>
            <person name="Togiya S."/>
            <person name="Komai F."/>
            <person name="Hara R."/>
            <person name="Takeuchi K."/>
            <person name="Arita M."/>
            <person name="Imose N."/>
            <person name="Musashino K."/>
            <person name="Yuuki H."/>
            <person name="Oshima A."/>
            <person name="Sasaki N."/>
            <person name="Aotsuka S."/>
            <person name="Yoshikawa Y."/>
            <person name="Matsunawa H."/>
            <person name="Ichihara T."/>
            <person name="Shiohata N."/>
            <person name="Sano S."/>
            <person name="Moriya S."/>
            <person name="Momiyama H."/>
            <person name="Satoh N."/>
            <person name="Takami S."/>
            <person name="Terashima Y."/>
            <person name="Suzuki O."/>
            <person name="Nakagawa S."/>
            <person name="Senoh A."/>
            <person name="Mizoguchi H."/>
            <person name="Goto Y."/>
            <person name="Shimizu F."/>
            <person name="Wakebe H."/>
            <person name="Hishigaki H."/>
            <person name="Watanabe T."/>
            <person name="Sugiyama A."/>
            <person name="Takemoto M."/>
            <person name="Kawakami B."/>
            <person name="Yamazaki M."/>
            <person name="Watanabe K."/>
            <person name="Kumagai A."/>
            <person name="Itakura S."/>
            <person name="Fukuzumi Y."/>
            <person name="Fujimori Y."/>
            <person name="Komiyama M."/>
            <person name="Tashiro H."/>
            <person name="Tanigami A."/>
            <person name="Fujiwara T."/>
            <person name="Ono T."/>
            <person name="Yamada K."/>
            <person name="Fujii Y."/>
            <person name="Ozaki K."/>
            <person name="Hirao M."/>
            <person name="Ohmori Y."/>
            <person name="Kawabata A."/>
            <person name="Hikiji T."/>
            <person name="Kobatake N."/>
            <person name="Inagaki H."/>
            <person name="Ikema Y."/>
            <person name="Okamoto S."/>
            <person name="Okitani R."/>
            <person name="Kawakami T."/>
            <person name="Noguchi S."/>
            <person name="Itoh T."/>
            <person name="Shigeta K."/>
            <person name="Senba T."/>
            <person name="Matsumura K."/>
            <person name="Nakajima Y."/>
            <person name="Mizuno T."/>
            <person name="Morinaga M."/>
            <person name="Sasaki M."/>
            <person name="Togashi T."/>
            <person name="Oyama M."/>
            <person name="Hata H."/>
            <person name="Watanabe M."/>
            <person name="Komatsu T."/>
            <person name="Mizushima-Sugano J."/>
            <person name="Satoh T."/>
            <person name="Shirai Y."/>
            <person name="Takahashi Y."/>
            <person name="Nakagawa K."/>
            <person name="Okumura K."/>
            <person name="Nagase T."/>
            <person name="Nomura N."/>
            <person name="Kikuchi H."/>
            <person name="Masuho Y."/>
            <person name="Yamashita R."/>
            <person name="Nakai K."/>
            <person name="Yada T."/>
            <person name="Nakamura Y."/>
            <person name="Ohara O."/>
            <person name="Isogai T."/>
            <person name="Sugano S."/>
        </authorList>
    </citation>
    <scope>NUCLEOTIDE SEQUENCE [LARGE SCALE MRNA] (ISOFORM 3)</scope>
    <source>
        <tissue>Brain</tissue>
    </source>
</reference>
<reference key="3">
    <citation type="journal article" date="2004" name="Nature">
        <title>The sequence and analysis of duplication-rich human chromosome 16.</title>
        <authorList>
            <person name="Martin J."/>
            <person name="Han C."/>
            <person name="Gordon L.A."/>
            <person name="Terry A."/>
            <person name="Prabhakar S."/>
            <person name="She X."/>
            <person name="Xie G."/>
            <person name="Hellsten U."/>
            <person name="Chan Y.M."/>
            <person name="Altherr M."/>
            <person name="Couronne O."/>
            <person name="Aerts A."/>
            <person name="Bajorek E."/>
            <person name="Black S."/>
            <person name="Blumer H."/>
            <person name="Branscomb E."/>
            <person name="Brown N.C."/>
            <person name="Bruno W.J."/>
            <person name="Buckingham J.M."/>
            <person name="Callen D.F."/>
            <person name="Campbell C.S."/>
            <person name="Campbell M.L."/>
            <person name="Campbell E.W."/>
            <person name="Caoile C."/>
            <person name="Challacombe J.F."/>
            <person name="Chasteen L.A."/>
            <person name="Chertkov O."/>
            <person name="Chi H.C."/>
            <person name="Christensen M."/>
            <person name="Clark L.M."/>
            <person name="Cohn J.D."/>
            <person name="Denys M."/>
            <person name="Detter J.C."/>
            <person name="Dickson M."/>
            <person name="Dimitrijevic-Bussod M."/>
            <person name="Escobar J."/>
            <person name="Fawcett J.J."/>
            <person name="Flowers D."/>
            <person name="Fotopulos D."/>
            <person name="Glavina T."/>
            <person name="Gomez M."/>
            <person name="Gonzales E."/>
            <person name="Goodstein D."/>
            <person name="Goodwin L.A."/>
            <person name="Grady D.L."/>
            <person name="Grigoriev I."/>
            <person name="Groza M."/>
            <person name="Hammon N."/>
            <person name="Hawkins T."/>
            <person name="Haydu L."/>
            <person name="Hildebrand C.E."/>
            <person name="Huang W."/>
            <person name="Israni S."/>
            <person name="Jett J."/>
            <person name="Jewett P.B."/>
            <person name="Kadner K."/>
            <person name="Kimball H."/>
            <person name="Kobayashi A."/>
            <person name="Krawczyk M.-C."/>
            <person name="Leyba T."/>
            <person name="Longmire J.L."/>
            <person name="Lopez F."/>
            <person name="Lou Y."/>
            <person name="Lowry S."/>
            <person name="Ludeman T."/>
            <person name="Manohar C.F."/>
            <person name="Mark G.A."/>
            <person name="McMurray K.L."/>
            <person name="Meincke L.J."/>
            <person name="Morgan J."/>
            <person name="Moyzis R.K."/>
            <person name="Mundt M.O."/>
            <person name="Munk A.C."/>
            <person name="Nandkeshwar R.D."/>
            <person name="Pitluck S."/>
            <person name="Pollard M."/>
            <person name="Predki P."/>
            <person name="Parson-Quintana B."/>
            <person name="Ramirez L."/>
            <person name="Rash S."/>
            <person name="Retterer J."/>
            <person name="Ricke D.O."/>
            <person name="Robinson D.L."/>
            <person name="Rodriguez A."/>
            <person name="Salamov A."/>
            <person name="Saunders E.H."/>
            <person name="Scott D."/>
            <person name="Shough T."/>
            <person name="Stallings R.L."/>
            <person name="Stalvey M."/>
            <person name="Sutherland R.D."/>
            <person name="Tapia R."/>
            <person name="Tesmer J.G."/>
            <person name="Thayer N."/>
            <person name="Thompson L.S."/>
            <person name="Tice H."/>
            <person name="Torney D.C."/>
            <person name="Tran-Gyamfi M."/>
            <person name="Tsai M."/>
            <person name="Ulanovsky L.E."/>
            <person name="Ustaszewska A."/>
            <person name="Vo N."/>
            <person name="White P.S."/>
            <person name="Williams A.L."/>
            <person name="Wills P.L."/>
            <person name="Wu J.-R."/>
            <person name="Wu K."/>
            <person name="Yang J."/>
            <person name="DeJong P."/>
            <person name="Bruce D."/>
            <person name="Doggett N.A."/>
            <person name="Deaven L."/>
            <person name="Schmutz J."/>
            <person name="Grimwood J."/>
            <person name="Richardson P."/>
            <person name="Rokhsar D.S."/>
            <person name="Eichler E.E."/>
            <person name="Gilna P."/>
            <person name="Lucas S.M."/>
            <person name="Myers R.M."/>
            <person name="Rubin E.M."/>
            <person name="Pennacchio L.A."/>
        </authorList>
    </citation>
    <scope>NUCLEOTIDE SEQUENCE [LARGE SCALE GENOMIC DNA]</scope>
</reference>
<reference key="4">
    <citation type="submission" date="2005-09" db="EMBL/GenBank/DDBJ databases">
        <authorList>
            <person name="Mural R.J."/>
            <person name="Istrail S."/>
            <person name="Sutton G.G."/>
            <person name="Florea L."/>
            <person name="Halpern A.L."/>
            <person name="Mobarry C.M."/>
            <person name="Lippert R."/>
            <person name="Walenz B."/>
            <person name="Shatkay H."/>
            <person name="Dew I."/>
            <person name="Miller J.R."/>
            <person name="Flanigan M.J."/>
            <person name="Edwards N.J."/>
            <person name="Bolanos R."/>
            <person name="Fasulo D."/>
            <person name="Halldorsson B.V."/>
            <person name="Hannenhalli S."/>
            <person name="Turner R."/>
            <person name="Yooseph S."/>
            <person name="Lu F."/>
            <person name="Nusskern D.R."/>
            <person name="Shue B.C."/>
            <person name="Zheng X.H."/>
            <person name="Zhong F."/>
            <person name="Delcher A.L."/>
            <person name="Huson D.H."/>
            <person name="Kravitz S.A."/>
            <person name="Mouchard L."/>
            <person name="Reinert K."/>
            <person name="Remington K.A."/>
            <person name="Clark A.G."/>
            <person name="Waterman M.S."/>
            <person name="Eichler E.E."/>
            <person name="Adams M.D."/>
            <person name="Hunkapiller M.W."/>
            <person name="Myers E.W."/>
            <person name="Venter J.C."/>
        </authorList>
    </citation>
    <scope>NUCLEOTIDE SEQUENCE [LARGE SCALE GENOMIC DNA]</scope>
</reference>
<reference key="5">
    <citation type="journal article" date="2004" name="Genome Res.">
        <title>The status, quality, and expansion of the NIH full-length cDNA project: the Mammalian Gene Collection (MGC).</title>
        <authorList>
            <consortium name="The MGC Project Team"/>
        </authorList>
    </citation>
    <scope>NUCLEOTIDE SEQUENCE [LARGE SCALE MRNA] (ISOFORM 2)</scope>
    <source>
        <tissue>Blood</tissue>
    </source>
</reference>
<reference key="6">
    <citation type="journal article" date="2006" name="Brain Res.">
        <title>Characterization of KIAA0513, a novel signaling molecule that interacts with modulators of neuroplasticity, apoptosis, and the cytoskeleton.</title>
        <authorList>
            <person name="Lauriat T.L."/>
            <person name="Dracheva S."/>
            <person name="Kremerskothen J."/>
            <person name="Duning K."/>
            <person name="Haroutunian V."/>
            <person name="Buxbaum J.D."/>
            <person name="Hyde T.M."/>
            <person name="Kleinman J.E."/>
            <person name="McInnes L.A."/>
        </authorList>
    </citation>
    <scope>TISSUE SPECIFICITY</scope>
    <scope>SUBCELLULAR LOCATION</scope>
</reference>
<reference key="7">
    <citation type="journal article" date="2013" name="J. Proteome Res.">
        <title>Toward a comprehensive characterization of a human cancer cell phosphoproteome.</title>
        <authorList>
            <person name="Zhou H."/>
            <person name="Di Palma S."/>
            <person name="Preisinger C."/>
            <person name="Peng M."/>
            <person name="Polat A.N."/>
            <person name="Heck A.J."/>
            <person name="Mohammed S."/>
        </authorList>
    </citation>
    <scope>IDENTIFICATION BY MASS SPECTROMETRY [LARGE SCALE ANALYSIS]</scope>
    <source>
        <tissue>Erythroleukemia</tissue>
    </source>
</reference>
<sequence length="411" mass="46639">METPEVPVGSLIDFGPEAPTSSPLEAPPPVLQDGDGSLGDGASESETTESADSENDMGESPSHPSWDQDRRSSSNESFSSNQSTESTQDEETLALRDFMRGYVEKIFSGGEDLDQEEKAKFGEYCSSENGKGREWFARYVSAQRCNSKCVSEATFYRLVQSFAVVLFECHQMDDFGPAKNLMTMCFTYYHIGKPQLLPPESREKPAGSIDSYLKSANSWLAEKKDIAERLLKNTSARTENVKGFFGGLETKLKGPLARRNEEDENKPQEKRPRAVTAYSPEDEKKGEKIYLYTHLKQQPIWHTLRFWNAAFFDAVHCERTKRSPTTRGDAGEEEEKREKWCHMTQEERDDSLRFNENITFGQLGTFTHNMLAFGLNKKLCNDFLKKQAVIGNLDEEQYKLLSDHIEQMATE</sequence>
<gene>
    <name type="primary">KIAA0513</name>
</gene>
<name>K0513_HUMAN</name>
<protein>
    <recommendedName>
        <fullName>Uncharacterized protein KIAA0513</fullName>
    </recommendedName>
</protein>
<feature type="chain" id="PRO_0000050757" description="Uncharacterized protein KIAA0513">
    <location>
        <begin position="1"/>
        <end position="411"/>
    </location>
</feature>
<feature type="region of interest" description="Disordered" evidence="2">
    <location>
        <begin position="1"/>
        <end position="91"/>
    </location>
</feature>
<feature type="region of interest" description="Disordered" evidence="2">
    <location>
        <begin position="253"/>
        <end position="280"/>
    </location>
</feature>
<feature type="compositionally biased region" description="Acidic residues" evidence="2">
    <location>
        <begin position="46"/>
        <end position="57"/>
    </location>
</feature>
<feature type="compositionally biased region" description="Low complexity" evidence="2">
    <location>
        <begin position="74"/>
        <end position="86"/>
    </location>
</feature>
<feature type="compositionally biased region" description="Basic and acidic residues" evidence="2">
    <location>
        <begin position="258"/>
        <end position="272"/>
    </location>
</feature>
<feature type="modified residue" description="Phosphoserine" evidence="1">
    <location>
        <position position="279"/>
    </location>
</feature>
<feature type="splice variant" id="VSP_011551" description="In isoform 2." evidence="5">
    <location>
        <begin position="302"/>
        <end position="411"/>
    </location>
</feature>
<feature type="splice variant" id="VSP_054680" description="In isoform 3." evidence="4">
    <location>
        <begin position="327"/>
        <end position="336"/>
    </location>
</feature>
<feature type="sequence variant" id="VAR_034035" description="In dbSNP:rs4783121.">
    <original>R</original>
    <variation>H</variation>
    <location>
        <position position="100"/>
    </location>
</feature>
<comment type="subcellular location">
    <subcellularLocation>
        <location evidence="7">Cytoplasm</location>
    </subcellularLocation>
</comment>
<comment type="alternative products">
    <event type="alternative splicing"/>
    <isoform>
        <id>O60268-1</id>
        <name>1</name>
        <sequence type="displayed"/>
    </isoform>
    <isoform>
        <id>O60268-2</id>
        <name>2</name>
        <sequence type="described" ref="VSP_011551"/>
    </isoform>
    <isoform>
        <id>O60268-3</id>
        <name>3</name>
        <sequence type="described" ref="VSP_054680"/>
    </isoform>
</comment>
<comment type="tissue specificity">
    <text evidence="3">Widely expressed, highest levels in cerebellum, brain cortex, hippocampus, pons, putamen and amygdala. Highly expressed in neurons, but also present in glial cells. Slightly higher expression in the dorsolateral prefrontal cortex of schizophrenic patients compared to control individuals.</text>
</comment>
<comment type="sequence caution" evidence="6">
    <conflict type="erroneous initiation">
        <sequence resource="EMBL-CDS" id="BAA25439"/>
    </conflict>
</comment>
<keyword id="KW-0025">Alternative splicing</keyword>
<keyword id="KW-0963">Cytoplasm</keyword>
<keyword id="KW-0597">Phosphoprotein</keyword>
<keyword id="KW-1267">Proteomics identification</keyword>
<keyword id="KW-1185">Reference proteome</keyword>
<dbReference type="EMBL" id="AB011085">
    <property type="protein sequence ID" value="BAA25439.2"/>
    <property type="status" value="ALT_INIT"/>
    <property type="molecule type" value="mRNA"/>
</dbReference>
<dbReference type="EMBL" id="AK299892">
    <property type="protein sequence ID" value="BAG61737.1"/>
    <property type="molecule type" value="mRNA"/>
</dbReference>
<dbReference type="EMBL" id="AC026469">
    <property type="status" value="NOT_ANNOTATED_CDS"/>
    <property type="molecule type" value="Genomic_DNA"/>
</dbReference>
<dbReference type="EMBL" id="AC092341">
    <property type="status" value="NOT_ANNOTATED_CDS"/>
    <property type="molecule type" value="Genomic_DNA"/>
</dbReference>
<dbReference type="EMBL" id="CH471114">
    <property type="protein sequence ID" value="EAW95460.1"/>
    <property type="molecule type" value="Genomic_DNA"/>
</dbReference>
<dbReference type="EMBL" id="CH471114">
    <property type="protein sequence ID" value="EAW95462.1"/>
    <property type="molecule type" value="Genomic_DNA"/>
</dbReference>
<dbReference type="EMBL" id="BC030280">
    <property type="protein sequence ID" value="AAH30280.1"/>
    <property type="molecule type" value="mRNA"/>
</dbReference>
<dbReference type="CCDS" id="CCDS32499.1">
    <molecule id="O60268-1"/>
</dbReference>
<dbReference type="CCDS" id="CCDS67091.1">
    <molecule id="O60268-3"/>
</dbReference>
<dbReference type="CCDS" id="CCDS73919.1">
    <molecule id="O60268-2"/>
</dbReference>
<dbReference type="RefSeq" id="NP_001273494.1">
    <molecule id="O60268-1"/>
    <property type="nucleotide sequence ID" value="NM_001286565.1"/>
</dbReference>
<dbReference type="RefSeq" id="NP_001273495.1">
    <molecule id="O60268-3"/>
    <property type="nucleotide sequence ID" value="NM_001286566.2"/>
</dbReference>
<dbReference type="RefSeq" id="NP_001284695.1">
    <molecule id="O60268-2"/>
    <property type="nucleotide sequence ID" value="NM_001297766.2"/>
</dbReference>
<dbReference type="RefSeq" id="NP_001375288.1">
    <molecule id="O60268-1"/>
    <property type="nucleotide sequence ID" value="NM_001388359.1"/>
</dbReference>
<dbReference type="RefSeq" id="NP_055547.1">
    <molecule id="O60268-1"/>
    <property type="nucleotide sequence ID" value="NM_014732.4"/>
</dbReference>
<dbReference type="RefSeq" id="XP_005256322.1">
    <property type="nucleotide sequence ID" value="XM_005256265.3"/>
</dbReference>
<dbReference type="RefSeq" id="XP_016879401.1">
    <molecule id="O60268-1"/>
    <property type="nucleotide sequence ID" value="XM_017023912.2"/>
</dbReference>
<dbReference type="RefSeq" id="XP_047290937.1">
    <molecule id="O60268-1"/>
    <property type="nucleotide sequence ID" value="XM_047434981.1"/>
</dbReference>
<dbReference type="RefSeq" id="XP_047290938.1">
    <molecule id="O60268-1"/>
    <property type="nucleotide sequence ID" value="XM_047434982.1"/>
</dbReference>
<dbReference type="RefSeq" id="XP_047290939.1">
    <molecule id="O60268-3"/>
    <property type="nucleotide sequence ID" value="XM_047434983.1"/>
</dbReference>
<dbReference type="RefSeq" id="XP_047290940.1">
    <molecule id="O60268-3"/>
    <property type="nucleotide sequence ID" value="XM_047434984.1"/>
</dbReference>
<dbReference type="RefSeq" id="XP_054170511.1">
    <molecule id="O60268-1"/>
    <property type="nucleotide sequence ID" value="XM_054314536.1"/>
</dbReference>
<dbReference type="RefSeq" id="XP_054170512.1">
    <molecule id="O60268-1"/>
    <property type="nucleotide sequence ID" value="XM_054314537.1"/>
</dbReference>
<dbReference type="RefSeq" id="XP_054170513.1">
    <molecule id="O60268-1"/>
    <property type="nucleotide sequence ID" value="XM_054314538.1"/>
</dbReference>
<dbReference type="RefSeq" id="XP_054170514.1">
    <molecule id="O60268-3"/>
    <property type="nucleotide sequence ID" value="XM_054314539.1"/>
</dbReference>
<dbReference type="RefSeq" id="XP_054170515.1">
    <molecule id="O60268-3"/>
    <property type="nucleotide sequence ID" value="XM_054314540.1"/>
</dbReference>
<dbReference type="BioGRID" id="115110">
    <property type="interactions" value="7"/>
</dbReference>
<dbReference type="FunCoup" id="O60268">
    <property type="interactions" value="471"/>
</dbReference>
<dbReference type="IntAct" id="O60268">
    <property type="interactions" value="3"/>
</dbReference>
<dbReference type="MINT" id="O60268"/>
<dbReference type="STRING" id="9606.ENSP00000457408"/>
<dbReference type="GlyGen" id="O60268">
    <property type="glycosylation" value="1 site"/>
</dbReference>
<dbReference type="iPTMnet" id="O60268"/>
<dbReference type="PhosphoSitePlus" id="O60268"/>
<dbReference type="BioMuta" id="KIAA0513"/>
<dbReference type="jPOST" id="O60268"/>
<dbReference type="MassIVE" id="O60268"/>
<dbReference type="PaxDb" id="9606-ENSP00000457408"/>
<dbReference type="PeptideAtlas" id="O60268"/>
<dbReference type="ProteomicsDB" id="49299">
    <molecule id="O60268-1"/>
</dbReference>
<dbReference type="ProteomicsDB" id="49300">
    <molecule id="O60268-2"/>
</dbReference>
<dbReference type="ProteomicsDB" id="5046"/>
<dbReference type="Pumba" id="O60268"/>
<dbReference type="Antibodypedia" id="2867">
    <property type="antibodies" value="105 antibodies from 20 providers"/>
</dbReference>
<dbReference type="DNASU" id="9764"/>
<dbReference type="Ensembl" id="ENST00000538274.6">
    <molecule id="O60268-3"/>
    <property type="protein sequence ID" value="ENSP00000446439.1"/>
    <property type="gene ID" value="ENSG00000135709.14"/>
</dbReference>
<dbReference type="Ensembl" id="ENST00000566428.5">
    <molecule id="O60268-1"/>
    <property type="protein sequence ID" value="ENSP00000457408.1"/>
    <property type="gene ID" value="ENSG00000135709.14"/>
</dbReference>
<dbReference type="Ensembl" id="ENST00000567328.6">
    <molecule id="O60268-2"/>
    <property type="protein sequence ID" value="ENSP00000455544.1"/>
    <property type="gene ID" value="ENSG00000135709.14"/>
</dbReference>
<dbReference type="Ensembl" id="ENST00000683363.1">
    <molecule id="O60268-1"/>
    <property type="protein sequence ID" value="ENSP00000507772.1"/>
    <property type="gene ID" value="ENSG00000135709.14"/>
</dbReference>
<dbReference type="GeneID" id="9764"/>
<dbReference type="KEGG" id="hsa:9764"/>
<dbReference type="MANE-Select" id="ENST00000683363.1">
    <property type="protein sequence ID" value="ENSP00000507772.1"/>
    <property type="RefSeq nucleotide sequence ID" value="NM_001388359.1"/>
    <property type="RefSeq protein sequence ID" value="NP_001375288.1"/>
</dbReference>
<dbReference type="UCSC" id="uc002fiu.5">
    <molecule id="O60268-1"/>
    <property type="organism name" value="human"/>
</dbReference>
<dbReference type="AGR" id="HGNC:29058"/>
<dbReference type="CTD" id="9764"/>
<dbReference type="DisGeNET" id="9764"/>
<dbReference type="GeneCards" id="KIAA0513"/>
<dbReference type="HGNC" id="HGNC:29058">
    <property type="gene designation" value="KIAA0513"/>
</dbReference>
<dbReference type="HPA" id="ENSG00000135709">
    <property type="expression patterns" value="Group enriched (brain, pituitary gland)"/>
</dbReference>
<dbReference type="MIM" id="611675">
    <property type="type" value="gene"/>
</dbReference>
<dbReference type="neXtProt" id="NX_O60268"/>
<dbReference type="OpenTargets" id="ENSG00000135709"/>
<dbReference type="PharmGKB" id="PA134951520"/>
<dbReference type="VEuPathDB" id="HostDB:ENSG00000135709"/>
<dbReference type="eggNOG" id="ENOG502QV4D">
    <property type="taxonomic scope" value="Eukaryota"/>
</dbReference>
<dbReference type="GeneTree" id="ENSGT00390000009535"/>
<dbReference type="HOGENOM" id="CLU_059866_0_0_1"/>
<dbReference type="InParanoid" id="O60268"/>
<dbReference type="OMA" id="ERDKWSH"/>
<dbReference type="OrthoDB" id="6268344at2759"/>
<dbReference type="PAN-GO" id="O60268">
    <property type="GO annotations" value="0 GO annotations based on evolutionary models"/>
</dbReference>
<dbReference type="PhylomeDB" id="O60268"/>
<dbReference type="TreeFam" id="TF325884"/>
<dbReference type="PathwayCommons" id="O60268"/>
<dbReference type="SignaLink" id="O60268"/>
<dbReference type="BioGRID-ORCS" id="9764">
    <property type="hits" value="14 hits in 1160 CRISPR screens"/>
</dbReference>
<dbReference type="CD-CODE" id="FB4E32DD">
    <property type="entry name" value="Presynaptic clusters and postsynaptic densities"/>
</dbReference>
<dbReference type="ChiTaRS" id="KIAA0513">
    <property type="organism name" value="human"/>
</dbReference>
<dbReference type="GenomeRNAi" id="9764"/>
<dbReference type="Pharos" id="O60268">
    <property type="development level" value="Tdark"/>
</dbReference>
<dbReference type="PRO" id="PR:O60268"/>
<dbReference type="Proteomes" id="UP000005640">
    <property type="component" value="Chromosome 16"/>
</dbReference>
<dbReference type="RNAct" id="O60268">
    <property type="molecule type" value="protein"/>
</dbReference>
<dbReference type="Bgee" id="ENSG00000135709">
    <property type="expression patterns" value="Expressed in cerebellar vermis and 197 other cell types or tissues"/>
</dbReference>
<dbReference type="ExpressionAtlas" id="O60268">
    <property type="expression patterns" value="baseline and differential"/>
</dbReference>
<dbReference type="GO" id="GO:0005737">
    <property type="term" value="C:cytoplasm"/>
    <property type="evidence" value="ECO:0007669"/>
    <property type="project" value="UniProtKB-SubCell"/>
</dbReference>
<dbReference type="InterPro" id="IPR039872">
    <property type="entry name" value="KIAA0513"/>
</dbReference>
<dbReference type="PANTHER" id="PTHR13663">
    <property type="entry name" value="SIMILAR TO RIKEN CDNA 6430548M08"/>
    <property type="match status" value="1"/>
</dbReference>
<dbReference type="PANTHER" id="PTHR13663:SF2">
    <property type="entry name" value="SIMILAR TO RIKEN CDNA 6430548M08"/>
    <property type="match status" value="1"/>
</dbReference>
<evidence type="ECO:0000250" key="1">
    <source>
        <dbReference type="UniProtKB" id="Q8R0A7"/>
    </source>
</evidence>
<evidence type="ECO:0000256" key="2">
    <source>
        <dbReference type="SAM" id="MobiDB-lite"/>
    </source>
</evidence>
<evidence type="ECO:0000269" key="3">
    <source>
    </source>
</evidence>
<evidence type="ECO:0000303" key="4">
    <source>
    </source>
</evidence>
<evidence type="ECO:0000303" key="5">
    <source>
    </source>
</evidence>
<evidence type="ECO:0000305" key="6"/>
<evidence type="ECO:0000305" key="7">
    <source>
    </source>
</evidence>